<protein>
    <recommendedName>
        <fullName>Acylphosphatase</fullName>
        <ecNumber>3.6.1.7</ecNumber>
    </recommendedName>
    <alternativeName>
        <fullName>Acylphosphate phosphohydrolase</fullName>
    </alternativeName>
</protein>
<evidence type="ECO:0000255" key="1">
    <source>
        <dbReference type="PROSITE-ProRule" id="PRU00520"/>
    </source>
</evidence>
<evidence type="ECO:0000305" key="2"/>
<comment type="catalytic activity">
    <reaction>
        <text>an acyl phosphate + H2O = a carboxylate + phosphate + H(+)</text>
        <dbReference type="Rhea" id="RHEA:14965"/>
        <dbReference type="ChEBI" id="CHEBI:15377"/>
        <dbReference type="ChEBI" id="CHEBI:15378"/>
        <dbReference type="ChEBI" id="CHEBI:29067"/>
        <dbReference type="ChEBI" id="CHEBI:43474"/>
        <dbReference type="ChEBI" id="CHEBI:59918"/>
        <dbReference type="EC" id="3.6.1.7"/>
    </reaction>
</comment>
<comment type="similarity">
    <text evidence="2">Belongs to the acylphosphatase family.</text>
</comment>
<comment type="sequence caution" evidence="2">
    <conflict type="erroneous initiation">
        <sequence resource="EMBL-CDS" id="AAF94513"/>
    </conflict>
</comment>
<proteinExistence type="inferred from homology"/>
<dbReference type="EC" id="3.6.1.7"/>
<dbReference type="EMBL" id="AE003852">
    <property type="protein sequence ID" value="AAF94513.1"/>
    <property type="status" value="ALT_INIT"/>
    <property type="molecule type" value="Genomic_DNA"/>
</dbReference>
<dbReference type="PIR" id="A82210">
    <property type="entry name" value="A82210"/>
</dbReference>
<dbReference type="RefSeq" id="NP_230999.1">
    <property type="nucleotide sequence ID" value="NC_002505.1"/>
</dbReference>
<dbReference type="SMR" id="Q9KSA4"/>
<dbReference type="STRING" id="243277.VC_1355"/>
<dbReference type="DNASU" id="2614809"/>
<dbReference type="EnsemblBacteria" id="AAF94513">
    <property type="protein sequence ID" value="AAF94513"/>
    <property type="gene ID" value="VC_1355"/>
</dbReference>
<dbReference type="KEGG" id="vch:VC_1355"/>
<dbReference type="PATRIC" id="fig|243277.26.peg.1290"/>
<dbReference type="eggNOG" id="COG1254">
    <property type="taxonomic scope" value="Bacteria"/>
</dbReference>
<dbReference type="HOGENOM" id="CLU_141932_1_2_6"/>
<dbReference type="Proteomes" id="UP000000584">
    <property type="component" value="Chromosome 1"/>
</dbReference>
<dbReference type="GO" id="GO:0003998">
    <property type="term" value="F:acylphosphatase activity"/>
    <property type="evidence" value="ECO:0000318"/>
    <property type="project" value="GO_Central"/>
</dbReference>
<dbReference type="FunFam" id="3.30.70.100:FF:000012">
    <property type="entry name" value="Acylphosphatase"/>
    <property type="match status" value="1"/>
</dbReference>
<dbReference type="Gene3D" id="3.30.70.100">
    <property type="match status" value="1"/>
</dbReference>
<dbReference type="InterPro" id="IPR020456">
    <property type="entry name" value="Acylphosphatase"/>
</dbReference>
<dbReference type="InterPro" id="IPR001792">
    <property type="entry name" value="Acylphosphatase-like_dom"/>
</dbReference>
<dbReference type="InterPro" id="IPR036046">
    <property type="entry name" value="Acylphosphatase-like_dom_sf"/>
</dbReference>
<dbReference type="InterPro" id="IPR017968">
    <property type="entry name" value="Acylphosphatase_CS"/>
</dbReference>
<dbReference type="NCBIfam" id="NF011000">
    <property type="entry name" value="PRK14426.1"/>
    <property type="match status" value="1"/>
</dbReference>
<dbReference type="PANTHER" id="PTHR47268">
    <property type="entry name" value="ACYLPHOSPHATASE"/>
    <property type="match status" value="1"/>
</dbReference>
<dbReference type="PANTHER" id="PTHR47268:SF4">
    <property type="entry name" value="ACYLPHOSPHATASE"/>
    <property type="match status" value="1"/>
</dbReference>
<dbReference type="Pfam" id="PF00708">
    <property type="entry name" value="Acylphosphatase"/>
    <property type="match status" value="1"/>
</dbReference>
<dbReference type="SUPFAM" id="SSF54975">
    <property type="entry name" value="Acylphosphatase/BLUF domain-like"/>
    <property type="match status" value="1"/>
</dbReference>
<dbReference type="PROSITE" id="PS00150">
    <property type="entry name" value="ACYLPHOSPHATASE_1"/>
    <property type="match status" value="1"/>
</dbReference>
<dbReference type="PROSITE" id="PS00151">
    <property type="entry name" value="ACYLPHOSPHATASE_2"/>
    <property type="match status" value="1"/>
</dbReference>
<dbReference type="PROSITE" id="PS51160">
    <property type="entry name" value="ACYLPHOSPHATASE_3"/>
    <property type="match status" value="1"/>
</dbReference>
<sequence length="91" mass="10279">MEKQCSKFIVSGHVQGVGFRYHTSHQGLKLGLTGYAKNLNNGDVEVVACGTPERLEELYLWLQEGPKTASVRQVRRLSSELEHDYQGFEIL</sequence>
<accession>Q9KSA4</accession>
<name>ACYP_VIBCH</name>
<organism>
    <name type="scientific">Vibrio cholerae serotype O1 (strain ATCC 39315 / El Tor Inaba N16961)</name>
    <dbReference type="NCBI Taxonomy" id="243277"/>
    <lineage>
        <taxon>Bacteria</taxon>
        <taxon>Pseudomonadati</taxon>
        <taxon>Pseudomonadota</taxon>
        <taxon>Gammaproteobacteria</taxon>
        <taxon>Vibrionales</taxon>
        <taxon>Vibrionaceae</taxon>
        <taxon>Vibrio</taxon>
    </lineage>
</organism>
<keyword id="KW-0378">Hydrolase</keyword>
<keyword id="KW-1185">Reference proteome</keyword>
<feature type="chain" id="PRO_0000326839" description="Acylphosphatase">
    <location>
        <begin position="1"/>
        <end position="91"/>
    </location>
</feature>
<feature type="domain" description="Acylphosphatase-like" evidence="1">
    <location>
        <begin position="5"/>
        <end position="91"/>
    </location>
</feature>
<feature type="active site" evidence="1">
    <location>
        <position position="20"/>
    </location>
</feature>
<feature type="active site" evidence="1">
    <location>
        <position position="38"/>
    </location>
</feature>
<reference key="1">
    <citation type="journal article" date="2000" name="Nature">
        <title>DNA sequence of both chromosomes of the cholera pathogen Vibrio cholerae.</title>
        <authorList>
            <person name="Heidelberg J.F."/>
            <person name="Eisen J.A."/>
            <person name="Nelson W.C."/>
            <person name="Clayton R.A."/>
            <person name="Gwinn M.L."/>
            <person name="Dodson R.J."/>
            <person name="Haft D.H."/>
            <person name="Hickey E.K."/>
            <person name="Peterson J.D."/>
            <person name="Umayam L.A."/>
            <person name="Gill S.R."/>
            <person name="Nelson K.E."/>
            <person name="Read T.D."/>
            <person name="Tettelin H."/>
            <person name="Richardson D.L."/>
            <person name="Ermolaeva M.D."/>
            <person name="Vamathevan J.J."/>
            <person name="Bass S."/>
            <person name="Qin H."/>
            <person name="Dragoi I."/>
            <person name="Sellers P."/>
            <person name="McDonald L.A."/>
            <person name="Utterback T.R."/>
            <person name="Fleischmann R.D."/>
            <person name="Nierman W.C."/>
            <person name="White O."/>
            <person name="Salzberg S.L."/>
            <person name="Smith H.O."/>
            <person name="Colwell R.R."/>
            <person name="Mekalanos J.J."/>
            <person name="Venter J.C."/>
            <person name="Fraser C.M."/>
        </authorList>
    </citation>
    <scope>NUCLEOTIDE SEQUENCE [LARGE SCALE GENOMIC DNA]</scope>
    <source>
        <strain>ATCC 39315 / El Tor Inaba N16961</strain>
    </source>
</reference>
<gene>
    <name type="primary">acyP</name>
    <name type="ordered locus">VC_1355</name>
</gene>